<accession>O70601</accession>
<reference key="1">
    <citation type="journal article" date="1998" name="J. Exp. Med.">
        <title>Molecular cloning of the cDNA encoding pp36, a tyrosine-phosphorylated adaptor protein selectively expressed by T cells and natural killer cells.</title>
        <authorList>
            <person name="Weber J.R."/>
            <person name="Orstavik S."/>
            <person name="Torgersen K.M."/>
            <person name="Danbolt N.C."/>
            <person name="Berg S.F."/>
            <person name="Ryan J.C."/>
            <person name="Tasken K."/>
            <person name="Imboden J.B."/>
            <person name="Vaage J.T."/>
        </authorList>
    </citation>
    <scope>NUCLEOTIDE SEQUENCE [MRNA]</scope>
    <source>
        <strain>PVG</strain>
        <tissue>Natural killer cell</tissue>
    </source>
</reference>
<reference key="2">
    <citation type="journal article" date="2006" name="Blood">
        <title>Transmembrane adaptor molecules: a new category of lymphoid-cell markers.</title>
        <authorList>
            <person name="Tedoldi S."/>
            <person name="Paterson J.C."/>
            <person name="Hansmann M.-L."/>
            <person name="Natkunam Y."/>
            <person name="Rudiger T."/>
            <person name="Angelisova P."/>
            <person name="Du M.Q."/>
            <person name="Roberton H."/>
            <person name="Roncador G."/>
            <person name="Sanchez L."/>
            <person name="Pozzobon M."/>
            <person name="Masir N."/>
            <person name="Barry R."/>
            <person name="Pileri S."/>
            <person name="Mason D.Y."/>
            <person name="Marafioti T."/>
            <person name="Horejsi V."/>
        </authorList>
    </citation>
    <scope>TISSUE SPECIFICITY</scope>
</reference>
<reference key="3">
    <citation type="journal article" date="2012" name="Nat. Commun.">
        <title>Quantitative maps of protein phosphorylation sites across 14 different rat organs and tissues.</title>
        <authorList>
            <person name="Lundby A."/>
            <person name="Secher A."/>
            <person name="Lage K."/>
            <person name="Nordsborg N.B."/>
            <person name="Dmytriyev A."/>
            <person name="Lundby C."/>
            <person name="Olsen J.V."/>
        </authorList>
    </citation>
    <scope>PHOSPHORYLATION [LARGE SCALE ANALYSIS] AT SER-41; SER-104; SER-109; SER-112 AND SER-199</scope>
    <scope>IDENTIFICATION BY MASS SPECTROMETRY [LARGE SCALE ANALYSIS]</scope>
</reference>
<feature type="chain" id="PRO_0000083327" description="Linker for activation of T-cells family member 1">
    <location>
        <begin position="1"/>
        <end position="241"/>
    </location>
</feature>
<feature type="topological domain" description="Extracellular" evidence="4">
    <location>
        <begin position="1"/>
        <end position="4"/>
    </location>
</feature>
<feature type="transmembrane region" description="Helical; Signal-anchor for type III membrane protein" evidence="4">
    <location>
        <begin position="5"/>
        <end position="28"/>
    </location>
</feature>
<feature type="topological domain" description="Cytoplasmic" evidence="4">
    <location>
        <begin position="29"/>
        <end position="241"/>
    </location>
</feature>
<feature type="region of interest" description="Disordered" evidence="5">
    <location>
        <begin position="78"/>
        <end position="139"/>
    </location>
</feature>
<feature type="region of interest" description="Interaction with PLCG1" evidence="1">
    <location>
        <begin position="136"/>
        <end position="139"/>
    </location>
</feature>
<feature type="region of interest" description="Interaction with GRB2, GRAP2 and PIK3R1" evidence="1">
    <location>
        <begin position="175"/>
        <end position="178"/>
    </location>
</feature>
<feature type="region of interest" description="Interaction with GRB2, GRAP2 and PIK3R1" evidence="1">
    <location>
        <begin position="195"/>
        <end position="198"/>
    </location>
</feature>
<feature type="region of interest" description="Disordered" evidence="5">
    <location>
        <begin position="209"/>
        <end position="241"/>
    </location>
</feature>
<feature type="compositionally biased region" description="Polar residues" evidence="5">
    <location>
        <begin position="97"/>
        <end position="115"/>
    </location>
</feature>
<feature type="compositionally biased region" description="Acidic residues" evidence="5">
    <location>
        <begin position="124"/>
        <end position="133"/>
    </location>
</feature>
<feature type="compositionally biased region" description="Acidic residues" evidence="5">
    <location>
        <begin position="217"/>
        <end position="233"/>
    </location>
</feature>
<feature type="modified residue" description="Phosphoserine" evidence="7">
    <location>
        <position position="41"/>
    </location>
</feature>
<feature type="modified residue" description="Phosphoserine" evidence="2">
    <location>
        <position position="44"/>
    </location>
</feature>
<feature type="modified residue" description="Phosphoserine" evidence="2">
    <location>
        <position position="87"/>
    </location>
</feature>
<feature type="modified residue" description="Phosphoserine" evidence="7">
    <location>
        <position position="104"/>
    </location>
</feature>
<feature type="modified residue" description="Phosphoserine" evidence="7">
    <location>
        <position position="109"/>
    </location>
</feature>
<feature type="modified residue" description="Phosphoserine" evidence="7">
    <location>
        <position position="112"/>
    </location>
</feature>
<feature type="modified residue" description="Phosphotyrosine" evidence="2">
    <location>
        <position position="175"/>
    </location>
</feature>
<feature type="modified residue" description="Phosphoserine" evidence="7">
    <location>
        <position position="199"/>
    </location>
</feature>
<feature type="modified residue" description="Phosphoserine" evidence="3">
    <location>
        <position position="212"/>
    </location>
</feature>
<feature type="modified residue" description="Phosphoserine" evidence="2">
    <location>
        <position position="215"/>
    </location>
</feature>
<feature type="modified residue" description="Phosphotyrosine" evidence="2">
    <location>
        <position position="234"/>
    </location>
</feature>
<feature type="lipid moiety-binding region" description="S-palmitoyl cysteine" evidence="1">
    <location>
        <position position="27"/>
    </location>
</feature>
<feature type="lipid moiety-binding region" description="S-palmitoyl cysteine" evidence="1">
    <location>
        <position position="30"/>
    </location>
</feature>
<proteinExistence type="evidence at protein level"/>
<sequence length="241" mass="26193">MEADALSPVELGLLLLPFVVMLLAALCVRCRELPASYDSASTESLYPRSILIKPPQITVPRTPATSYPLVTSFPPLRQPDLLPIPRSPQPLGGSHRMPSSRQNSDDANSVASYENQEPARKNVDEDEDEDDYPEGYLVVLPDSSPAAVPVVSSAPVPSNPDLGDSAFSMESCEDYVNVPESEESAEASLDGSREYVNVSQDAQPVIRAELASVTSQEVEDEEEEDVDGEEAPDYENLQELN</sequence>
<protein>
    <recommendedName>
        <fullName>Linker for activation of T-cells family member 1</fullName>
    </recommendedName>
    <alternativeName>
        <fullName>36 kDa phosphotyrosine adapter protein</fullName>
        <shortName>pp36</shortName>
    </alternativeName>
    <alternativeName>
        <fullName>p36-38</fullName>
    </alternativeName>
</protein>
<evidence type="ECO:0000250" key="1"/>
<evidence type="ECO:0000250" key="2">
    <source>
        <dbReference type="UniProtKB" id="O43561"/>
    </source>
</evidence>
<evidence type="ECO:0000250" key="3">
    <source>
        <dbReference type="UniProtKB" id="O54957"/>
    </source>
</evidence>
<evidence type="ECO:0000255" key="4"/>
<evidence type="ECO:0000256" key="5">
    <source>
        <dbReference type="SAM" id="MobiDB-lite"/>
    </source>
</evidence>
<evidence type="ECO:0000269" key="6">
    <source>
    </source>
</evidence>
<evidence type="ECO:0007744" key="7">
    <source>
    </source>
</evidence>
<gene>
    <name type="primary">Lat</name>
</gene>
<keyword id="KW-1064">Adaptive immunity</keyword>
<keyword id="KW-1003">Cell membrane</keyword>
<keyword id="KW-0391">Immunity</keyword>
<keyword id="KW-0449">Lipoprotein</keyword>
<keyword id="KW-0467">Mast cell degranulation</keyword>
<keyword id="KW-0472">Membrane</keyword>
<keyword id="KW-0564">Palmitate</keyword>
<keyword id="KW-0597">Phosphoprotein</keyword>
<keyword id="KW-1185">Reference proteome</keyword>
<keyword id="KW-0735">Signal-anchor</keyword>
<keyword id="KW-0812">Transmembrane</keyword>
<keyword id="KW-1133">Transmembrane helix</keyword>
<keyword id="KW-0832">Ubl conjugation</keyword>
<organism>
    <name type="scientific">Rattus norvegicus</name>
    <name type="common">Rat</name>
    <dbReference type="NCBI Taxonomy" id="10116"/>
    <lineage>
        <taxon>Eukaryota</taxon>
        <taxon>Metazoa</taxon>
        <taxon>Chordata</taxon>
        <taxon>Craniata</taxon>
        <taxon>Vertebrata</taxon>
        <taxon>Euteleostomi</taxon>
        <taxon>Mammalia</taxon>
        <taxon>Eutheria</taxon>
        <taxon>Euarchontoglires</taxon>
        <taxon>Glires</taxon>
        <taxon>Rodentia</taxon>
        <taxon>Myomorpha</taxon>
        <taxon>Muroidea</taxon>
        <taxon>Muridae</taxon>
        <taxon>Murinae</taxon>
        <taxon>Rattus</taxon>
    </lineage>
</organism>
<comment type="function">
    <text evidence="1">Required for TCR (T-cell antigen receptor)- and pre-TCR-mediated signaling, both in mature T-cells and during their development. Involved in FCGR3 (low affinity immunoglobulin gamma Fc region receptor III)-mediated signaling in natural killer cells and FCER1 (high affinity immunoglobulin epsilon receptor)-mediated signaling in mast cells. Couples activation of these receptors and their associated kinases with distal intracellular events such as mobilization of intracellular calcium stores, PKC activation, MAPK activation or cytoskeletal reorganization through the recruitment of PLCG1, GRB2, GRAP2, and other signaling molecules (By similarity).</text>
</comment>
<comment type="subunit">
    <text evidence="1 3">When phosphorylated, interacts directly with the PIK3R1 subunit of phosphoinositide 3-kinase and the SH2 domains of GRB2, GRAP, GRAP2, PLCG1 and PLCG2. Interacts indirectly with CBL, SOS, VAV, and LCP2. Interacts with SHB, SKAP2 and CLNK. Interacts with FCGR1A. Interacts with GRB2, PLCG1 and THEMIS upon TCR activation in thymocytes (By similarity). Interacts with THEMIS2 (By similarity).</text>
</comment>
<comment type="subcellular location">
    <subcellularLocation>
        <location evidence="1">Cell membrane</location>
        <topology evidence="1">Single-pass type III membrane protein</topology>
    </subcellularLocation>
    <text evidence="1">Present in lipid rafts.</text>
</comment>
<comment type="tissue specificity">
    <text evidence="6">Expressed in NK cells. Present in lymph node, spleen and thymus (at protein level).</text>
</comment>
<comment type="PTM">
    <text evidence="1">Phosphorylated on tyrosines by ZAP70 upon TCR activation, or by SYK upon other immunoreceptor activation; which leads to the recruitment of multiple signaling molecules. Is one of the most prominently tyrosine-phosphorylated proteins detected following TCR engagement. May be dephosphorylated by PTPRJ (By similarity).</text>
</comment>
<comment type="PTM">
    <text evidence="1">Palmitoylation of Cys-27 and Cys-30 is required for raft targeting and efficient phosphorylation.</text>
</comment>
<comment type="PTM">
    <text evidence="2">Phosphorylated on tyrosines by ZAP70 upon TCR activation, or by SYK upon other immunoreceptor activation; which leads to the recruitment of multiple signaling molecules. Is one of the most prominently tyrosine-phosphorylated proteins detected following TCR engagement. May be dephosphorylated by PTPRJ. Phosphorylated by ITK leading to the recruitment of VAV1 to LAT-containing complexes.</text>
</comment>
<comment type="PTM">
    <text evidence="2">'Lys-63'-linked ubiquitinated by TRAF6.</text>
</comment>
<comment type="miscellaneous">
    <text evidence="1">Engagement of killer inhibitory receptors (KIR) disrupts the interaction of PLCG1 with LAT and blocks target cell-induced activation of PLC, maybe by inducing the dephosphorylation of LAT.</text>
</comment>
<name>LAT_RAT</name>
<dbReference type="EMBL" id="AJ001184">
    <property type="protein sequence ID" value="CAA04577.1"/>
    <property type="molecule type" value="mRNA"/>
</dbReference>
<dbReference type="RefSeq" id="NP_110480.1">
    <property type="nucleotide sequence ID" value="NM_030853.1"/>
</dbReference>
<dbReference type="FunCoup" id="O70601">
    <property type="interactions" value="388"/>
</dbReference>
<dbReference type="STRING" id="10116.ENSRNOP00000023563"/>
<dbReference type="iPTMnet" id="O70601"/>
<dbReference type="PhosphoSitePlus" id="O70601"/>
<dbReference type="PaxDb" id="10116-ENSRNOP00000023563"/>
<dbReference type="Ensembl" id="ENSRNOT00000023563.4">
    <property type="protein sequence ID" value="ENSRNOP00000023563.2"/>
    <property type="gene ID" value="ENSRNOG00000017429.4"/>
</dbReference>
<dbReference type="GeneID" id="81511"/>
<dbReference type="KEGG" id="rno:81511"/>
<dbReference type="UCSC" id="RGD:620802">
    <property type="organism name" value="rat"/>
</dbReference>
<dbReference type="AGR" id="RGD:620802"/>
<dbReference type="CTD" id="27040"/>
<dbReference type="RGD" id="620802">
    <property type="gene designation" value="Lat"/>
</dbReference>
<dbReference type="eggNOG" id="ENOG502SXAZ">
    <property type="taxonomic scope" value="Eukaryota"/>
</dbReference>
<dbReference type="GeneTree" id="ENSGT00390000014223"/>
<dbReference type="HOGENOM" id="CLU_093883_0_0_1"/>
<dbReference type="InParanoid" id="O70601"/>
<dbReference type="OMA" id="QEPACEN"/>
<dbReference type="OrthoDB" id="90843at9989"/>
<dbReference type="PhylomeDB" id="O70601"/>
<dbReference type="TreeFam" id="TF337741"/>
<dbReference type="Reactome" id="R-RNO-114604">
    <property type="pathway name" value="GPVI-mediated activation cascade"/>
</dbReference>
<dbReference type="Reactome" id="R-RNO-202433">
    <property type="pathway name" value="Generation of second messenger molecules"/>
</dbReference>
<dbReference type="Reactome" id="R-RNO-2424491">
    <property type="pathway name" value="DAP12 signaling"/>
</dbReference>
<dbReference type="Reactome" id="R-RNO-2454202">
    <property type="pathway name" value="Fc epsilon receptor (FCERI) signaling"/>
</dbReference>
<dbReference type="Reactome" id="R-RNO-2871796">
    <property type="pathway name" value="FCERI mediated MAPK activation"/>
</dbReference>
<dbReference type="Reactome" id="R-RNO-2871809">
    <property type="pathway name" value="FCERI mediated Ca+2 mobilization"/>
</dbReference>
<dbReference type="Reactome" id="R-RNO-5673001">
    <property type="pathway name" value="RAF/MAP kinase cascade"/>
</dbReference>
<dbReference type="PRO" id="PR:O70601"/>
<dbReference type="Proteomes" id="UP000002494">
    <property type="component" value="Chromosome 1"/>
</dbReference>
<dbReference type="Bgee" id="ENSRNOG00000017429">
    <property type="expression patterns" value="Expressed in thymus and 19 other cell types or tissues"/>
</dbReference>
<dbReference type="GO" id="GO:0005911">
    <property type="term" value="C:cell-cell junction"/>
    <property type="evidence" value="ECO:0000266"/>
    <property type="project" value="RGD"/>
</dbReference>
<dbReference type="GO" id="GO:0008180">
    <property type="term" value="C:COP9 signalosome"/>
    <property type="evidence" value="ECO:0000250"/>
    <property type="project" value="UniProtKB"/>
</dbReference>
<dbReference type="GO" id="GO:0001772">
    <property type="term" value="C:immunological synapse"/>
    <property type="evidence" value="ECO:0000266"/>
    <property type="project" value="RGD"/>
</dbReference>
<dbReference type="GO" id="GO:0016020">
    <property type="term" value="C:membrane"/>
    <property type="evidence" value="ECO:0000266"/>
    <property type="project" value="RGD"/>
</dbReference>
<dbReference type="GO" id="GO:0005886">
    <property type="term" value="C:plasma membrane"/>
    <property type="evidence" value="ECO:0000266"/>
    <property type="project" value="RGD"/>
</dbReference>
<dbReference type="GO" id="GO:0019901">
    <property type="term" value="F:protein kinase binding"/>
    <property type="evidence" value="ECO:0000266"/>
    <property type="project" value="RGD"/>
</dbReference>
<dbReference type="GO" id="GO:0035591">
    <property type="term" value="F:signaling adaptor activity"/>
    <property type="evidence" value="ECO:0000266"/>
    <property type="project" value="RGD"/>
</dbReference>
<dbReference type="GO" id="GO:0030159">
    <property type="term" value="F:signaling receptor complex adaptor activity"/>
    <property type="evidence" value="ECO:0000266"/>
    <property type="project" value="RGD"/>
</dbReference>
<dbReference type="GO" id="GO:0002250">
    <property type="term" value="P:adaptive immune response"/>
    <property type="evidence" value="ECO:0007669"/>
    <property type="project" value="UniProtKB-KW"/>
</dbReference>
<dbReference type="GO" id="GO:0019722">
    <property type="term" value="P:calcium-mediated signaling"/>
    <property type="evidence" value="ECO:0000266"/>
    <property type="project" value="RGD"/>
</dbReference>
<dbReference type="GO" id="GO:0010467">
    <property type="term" value="P:gene expression"/>
    <property type="evidence" value="ECO:0000266"/>
    <property type="project" value="RGD"/>
</dbReference>
<dbReference type="GO" id="GO:0048872">
    <property type="term" value="P:homeostasis of number of cells"/>
    <property type="evidence" value="ECO:0000266"/>
    <property type="project" value="RGD"/>
</dbReference>
<dbReference type="GO" id="GO:0006955">
    <property type="term" value="P:immune response"/>
    <property type="evidence" value="ECO:0000266"/>
    <property type="project" value="RGD"/>
</dbReference>
<dbReference type="GO" id="GO:0006954">
    <property type="term" value="P:inflammatory response"/>
    <property type="evidence" value="ECO:0000266"/>
    <property type="project" value="RGD"/>
</dbReference>
<dbReference type="GO" id="GO:0007229">
    <property type="term" value="P:integrin-mediated signaling pathway"/>
    <property type="evidence" value="ECO:0000266"/>
    <property type="project" value="RGD"/>
</dbReference>
<dbReference type="GO" id="GO:0035556">
    <property type="term" value="P:intracellular signal transduction"/>
    <property type="evidence" value="ECO:0000266"/>
    <property type="project" value="RGD"/>
</dbReference>
<dbReference type="GO" id="GO:0002260">
    <property type="term" value="P:lymphocyte homeostasis"/>
    <property type="evidence" value="ECO:0000266"/>
    <property type="project" value="RGD"/>
</dbReference>
<dbReference type="GO" id="GO:0043303">
    <property type="term" value="P:mast cell degranulation"/>
    <property type="evidence" value="ECO:0007669"/>
    <property type="project" value="UniProtKB-KW"/>
</dbReference>
<dbReference type="GO" id="GO:0043410">
    <property type="term" value="P:positive regulation of MAPK cascade"/>
    <property type="evidence" value="ECO:0000266"/>
    <property type="project" value="RGD"/>
</dbReference>
<dbReference type="GO" id="GO:0007265">
    <property type="term" value="P:Ras protein signal transduction"/>
    <property type="evidence" value="ECO:0000266"/>
    <property type="project" value="RGD"/>
</dbReference>
<dbReference type="GO" id="GO:0050863">
    <property type="term" value="P:regulation of T cell activation"/>
    <property type="evidence" value="ECO:0000266"/>
    <property type="project" value="RGD"/>
</dbReference>
<dbReference type="GO" id="GO:0050852">
    <property type="term" value="P:T cell receptor signaling pathway"/>
    <property type="evidence" value="ECO:0000266"/>
    <property type="project" value="RGD"/>
</dbReference>
<dbReference type="InterPro" id="IPR008359">
    <property type="entry name" value="Linker_for_activat_Tcells_prot"/>
</dbReference>
<dbReference type="PANTHER" id="PTHR15586">
    <property type="entry name" value="LINKER FOR ACTIVATION OF T-CELLS FAMILY MEMBER 1"/>
    <property type="match status" value="1"/>
</dbReference>
<dbReference type="PANTHER" id="PTHR15586:SF0">
    <property type="entry name" value="LINKER FOR ACTIVATION OF T-CELLS FAMILY MEMBER 1"/>
    <property type="match status" value="1"/>
</dbReference>
<dbReference type="Pfam" id="PF15234">
    <property type="entry name" value="LAT"/>
    <property type="match status" value="1"/>
</dbReference>
<dbReference type="PRINTS" id="PR01781">
    <property type="entry name" value="LATPROTEIN"/>
</dbReference>